<reference key="1">
    <citation type="journal article" date="2008" name="Chem. Biol. Interact.">
        <title>Extending the Bacillus cereus group genomics to putative food-borne pathogens of different toxicity.</title>
        <authorList>
            <person name="Lapidus A."/>
            <person name="Goltsman E."/>
            <person name="Auger S."/>
            <person name="Galleron N."/>
            <person name="Segurens B."/>
            <person name="Dossat C."/>
            <person name="Land M.L."/>
            <person name="Broussolle V."/>
            <person name="Brillard J."/>
            <person name="Guinebretiere M.-H."/>
            <person name="Sanchis V."/>
            <person name="Nguen-the C."/>
            <person name="Lereclus D."/>
            <person name="Richardson P."/>
            <person name="Wincker P."/>
            <person name="Weissenbach J."/>
            <person name="Ehrlich S.D."/>
            <person name="Sorokin A."/>
        </authorList>
    </citation>
    <scope>NUCLEOTIDE SEQUENCE [LARGE SCALE GENOMIC DNA]</scope>
    <source>
        <strain>DSM 22905 / CIP 110041 / 391-98 / NVH 391-98</strain>
    </source>
</reference>
<comment type="function">
    <text evidence="1">Catalyzes the conversion of 1-hydroxy-2-methyl-2-(E)-butenyl 4-diphosphate (HMBPP) into a mixture of isopentenyl diphosphate (IPP) and dimethylallyl diphosphate (DMAPP). Acts in the terminal step of the DOXP/MEP pathway for isoprenoid precursor biosynthesis.</text>
</comment>
<comment type="catalytic activity">
    <reaction evidence="1">
        <text>isopentenyl diphosphate + 2 oxidized [2Fe-2S]-[ferredoxin] + H2O = (2E)-4-hydroxy-3-methylbut-2-enyl diphosphate + 2 reduced [2Fe-2S]-[ferredoxin] + 2 H(+)</text>
        <dbReference type="Rhea" id="RHEA:24488"/>
        <dbReference type="Rhea" id="RHEA-COMP:10000"/>
        <dbReference type="Rhea" id="RHEA-COMP:10001"/>
        <dbReference type="ChEBI" id="CHEBI:15377"/>
        <dbReference type="ChEBI" id="CHEBI:15378"/>
        <dbReference type="ChEBI" id="CHEBI:33737"/>
        <dbReference type="ChEBI" id="CHEBI:33738"/>
        <dbReference type="ChEBI" id="CHEBI:128753"/>
        <dbReference type="ChEBI" id="CHEBI:128769"/>
        <dbReference type="EC" id="1.17.7.4"/>
    </reaction>
</comment>
<comment type="catalytic activity">
    <reaction evidence="1">
        <text>dimethylallyl diphosphate + 2 oxidized [2Fe-2S]-[ferredoxin] + H2O = (2E)-4-hydroxy-3-methylbut-2-enyl diphosphate + 2 reduced [2Fe-2S]-[ferredoxin] + 2 H(+)</text>
        <dbReference type="Rhea" id="RHEA:24825"/>
        <dbReference type="Rhea" id="RHEA-COMP:10000"/>
        <dbReference type="Rhea" id="RHEA-COMP:10001"/>
        <dbReference type="ChEBI" id="CHEBI:15377"/>
        <dbReference type="ChEBI" id="CHEBI:15378"/>
        <dbReference type="ChEBI" id="CHEBI:33737"/>
        <dbReference type="ChEBI" id="CHEBI:33738"/>
        <dbReference type="ChEBI" id="CHEBI:57623"/>
        <dbReference type="ChEBI" id="CHEBI:128753"/>
        <dbReference type="EC" id="1.17.7.4"/>
    </reaction>
</comment>
<comment type="cofactor">
    <cofactor evidence="1">
        <name>[4Fe-4S] cluster</name>
        <dbReference type="ChEBI" id="CHEBI:49883"/>
    </cofactor>
    <text evidence="1">Binds 1 [4Fe-4S] cluster per subunit.</text>
</comment>
<comment type="pathway">
    <text evidence="1">Isoprenoid biosynthesis; dimethylallyl diphosphate biosynthesis; dimethylallyl diphosphate from (2E)-4-hydroxy-3-methylbutenyl diphosphate: step 1/1.</text>
</comment>
<comment type="pathway">
    <text evidence="1">Isoprenoid biosynthesis; isopentenyl diphosphate biosynthesis via DXP pathway; isopentenyl diphosphate from 1-deoxy-D-xylulose 5-phosphate: step 6/6.</text>
</comment>
<comment type="similarity">
    <text evidence="1">Belongs to the IspH family.</text>
</comment>
<dbReference type="EC" id="1.17.7.4" evidence="1"/>
<dbReference type="EMBL" id="CP000764">
    <property type="protein sequence ID" value="ABS23242.1"/>
    <property type="molecule type" value="Genomic_DNA"/>
</dbReference>
<dbReference type="RefSeq" id="WP_012095479.1">
    <property type="nucleotide sequence ID" value="NC_009674.1"/>
</dbReference>
<dbReference type="SMR" id="A7GSY4"/>
<dbReference type="STRING" id="315749.Bcer98_3015"/>
<dbReference type="GeneID" id="33898263"/>
<dbReference type="KEGG" id="bcy:Bcer98_3015"/>
<dbReference type="eggNOG" id="COG0761">
    <property type="taxonomic scope" value="Bacteria"/>
</dbReference>
<dbReference type="HOGENOM" id="CLU_027486_0_0_9"/>
<dbReference type="OrthoDB" id="9777362at2"/>
<dbReference type="UniPathway" id="UPA00056">
    <property type="reaction ID" value="UER00097"/>
</dbReference>
<dbReference type="UniPathway" id="UPA00059">
    <property type="reaction ID" value="UER00105"/>
</dbReference>
<dbReference type="Proteomes" id="UP000002300">
    <property type="component" value="Chromosome"/>
</dbReference>
<dbReference type="GO" id="GO:0051539">
    <property type="term" value="F:4 iron, 4 sulfur cluster binding"/>
    <property type="evidence" value="ECO:0007669"/>
    <property type="project" value="UniProtKB-UniRule"/>
</dbReference>
<dbReference type="GO" id="GO:0051745">
    <property type="term" value="F:4-hydroxy-3-methylbut-2-enyl diphosphate reductase activity"/>
    <property type="evidence" value="ECO:0007669"/>
    <property type="project" value="UniProtKB-UniRule"/>
</dbReference>
<dbReference type="GO" id="GO:0046872">
    <property type="term" value="F:metal ion binding"/>
    <property type="evidence" value="ECO:0007669"/>
    <property type="project" value="UniProtKB-KW"/>
</dbReference>
<dbReference type="GO" id="GO:0050992">
    <property type="term" value="P:dimethylallyl diphosphate biosynthetic process"/>
    <property type="evidence" value="ECO:0007669"/>
    <property type="project" value="UniProtKB-UniRule"/>
</dbReference>
<dbReference type="GO" id="GO:0019288">
    <property type="term" value="P:isopentenyl diphosphate biosynthetic process, methylerythritol 4-phosphate pathway"/>
    <property type="evidence" value="ECO:0007669"/>
    <property type="project" value="UniProtKB-UniRule"/>
</dbReference>
<dbReference type="GO" id="GO:0016114">
    <property type="term" value="P:terpenoid biosynthetic process"/>
    <property type="evidence" value="ECO:0007669"/>
    <property type="project" value="UniProtKB-UniRule"/>
</dbReference>
<dbReference type="CDD" id="cd13944">
    <property type="entry name" value="lytB_ispH"/>
    <property type="match status" value="1"/>
</dbReference>
<dbReference type="Gene3D" id="3.40.50.11270">
    <property type="match status" value="1"/>
</dbReference>
<dbReference type="Gene3D" id="3.40.1010.20">
    <property type="entry name" value="4-hydroxy-3-methylbut-2-enyl diphosphate reductase, catalytic domain"/>
    <property type="match status" value="2"/>
</dbReference>
<dbReference type="HAMAP" id="MF_00191">
    <property type="entry name" value="IspH"/>
    <property type="match status" value="1"/>
</dbReference>
<dbReference type="InterPro" id="IPR003451">
    <property type="entry name" value="LytB/IspH"/>
</dbReference>
<dbReference type="NCBIfam" id="TIGR00216">
    <property type="entry name" value="ispH_lytB"/>
    <property type="match status" value="1"/>
</dbReference>
<dbReference type="NCBIfam" id="NF002187">
    <property type="entry name" value="PRK01045.1-1"/>
    <property type="match status" value="1"/>
</dbReference>
<dbReference type="PANTHER" id="PTHR30426">
    <property type="entry name" value="4-HYDROXY-3-METHYLBUT-2-ENYL DIPHOSPHATE REDUCTASE"/>
    <property type="match status" value="1"/>
</dbReference>
<dbReference type="PANTHER" id="PTHR30426:SF0">
    <property type="entry name" value="4-HYDROXY-3-METHYLBUT-2-ENYL DIPHOSPHATE REDUCTASE"/>
    <property type="match status" value="1"/>
</dbReference>
<dbReference type="Pfam" id="PF02401">
    <property type="entry name" value="LYTB"/>
    <property type="match status" value="1"/>
</dbReference>
<proteinExistence type="inferred from homology"/>
<accession>A7GSY4</accession>
<sequence length="315" mass="34766">MKIIKISPRGYCYGVVDAMVIARNAALDKSLPRPIYILGMIVHNKHVTDAFEEDGIITLDGPSRLEILDQIDSGTVIFTAHGVSPEVKQRAKEKGLTTIDATCPDVTKTHDLIEAKKSEGYHVIYIGKKGHPEPEGAVGIAPDIVHLIEKADDLKTLEIPTDKILVTNQTTMSQWDVQHLMEDIKKKFPTAEFHKEICLATQVRQEAVAKQADVADLTIVVGDPKSNNSNRLAQVSQEIAGTKAYRVADVSEIQLEWLQGVEAVAVTAGASTPTPITKEVIAFLEQYDPTNPATWERKRNVPLQKILPRVKVKKQ</sequence>
<organism>
    <name type="scientific">Bacillus cytotoxicus (strain DSM 22905 / CIP 110041 / 391-98 / NVH 391-98)</name>
    <dbReference type="NCBI Taxonomy" id="315749"/>
    <lineage>
        <taxon>Bacteria</taxon>
        <taxon>Bacillati</taxon>
        <taxon>Bacillota</taxon>
        <taxon>Bacilli</taxon>
        <taxon>Bacillales</taxon>
        <taxon>Bacillaceae</taxon>
        <taxon>Bacillus</taxon>
        <taxon>Bacillus cereus group</taxon>
    </lineage>
</organism>
<name>ISPH_BACCN</name>
<keyword id="KW-0004">4Fe-4S</keyword>
<keyword id="KW-0408">Iron</keyword>
<keyword id="KW-0411">Iron-sulfur</keyword>
<keyword id="KW-0414">Isoprene biosynthesis</keyword>
<keyword id="KW-0479">Metal-binding</keyword>
<keyword id="KW-0560">Oxidoreductase</keyword>
<feature type="chain" id="PRO_1000077512" description="4-hydroxy-3-methylbut-2-enyl diphosphate reductase">
    <location>
        <begin position="1"/>
        <end position="315"/>
    </location>
</feature>
<feature type="active site" description="Proton donor" evidence="1">
    <location>
        <position position="133"/>
    </location>
</feature>
<feature type="binding site" evidence="1">
    <location>
        <position position="12"/>
    </location>
    <ligand>
        <name>[4Fe-4S] cluster</name>
        <dbReference type="ChEBI" id="CHEBI:49883"/>
    </ligand>
</feature>
<feature type="binding site" evidence="1">
    <location>
        <position position="43"/>
    </location>
    <ligand>
        <name>(2E)-4-hydroxy-3-methylbut-2-enyl diphosphate</name>
        <dbReference type="ChEBI" id="CHEBI:128753"/>
    </ligand>
</feature>
<feature type="binding site" evidence="1">
    <location>
        <position position="43"/>
    </location>
    <ligand>
        <name>dimethylallyl diphosphate</name>
        <dbReference type="ChEBI" id="CHEBI:57623"/>
    </ligand>
</feature>
<feature type="binding site" evidence="1">
    <location>
        <position position="43"/>
    </location>
    <ligand>
        <name>isopentenyl diphosphate</name>
        <dbReference type="ChEBI" id="CHEBI:128769"/>
    </ligand>
</feature>
<feature type="binding site" evidence="1">
    <location>
        <position position="81"/>
    </location>
    <ligand>
        <name>(2E)-4-hydroxy-3-methylbut-2-enyl diphosphate</name>
        <dbReference type="ChEBI" id="CHEBI:128753"/>
    </ligand>
</feature>
<feature type="binding site" evidence="1">
    <location>
        <position position="81"/>
    </location>
    <ligand>
        <name>dimethylallyl diphosphate</name>
        <dbReference type="ChEBI" id="CHEBI:57623"/>
    </ligand>
</feature>
<feature type="binding site" evidence="1">
    <location>
        <position position="81"/>
    </location>
    <ligand>
        <name>isopentenyl diphosphate</name>
        <dbReference type="ChEBI" id="CHEBI:128769"/>
    </ligand>
</feature>
<feature type="binding site" evidence="1">
    <location>
        <position position="103"/>
    </location>
    <ligand>
        <name>[4Fe-4S] cluster</name>
        <dbReference type="ChEBI" id="CHEBI:49883"/>
    </ligand>
</feature>
<feature type="binding site" evidence="1">
    <location>
        <position position="131"/>
    </location>
    <ligand>
        <name>(2E)-4-hydroxy-3-methylbut-2-enyl diphosphate</name>
        <dbReference type="ChEBI" id="CHEBI:128753"/>
    </ligand>
</feature>
<feature type="binding site" evidence="1">
    <location>
        <position position="131"/>
    </location>
    <ligand>
        <name>dimethylallyl diphosphate</name>
        <dbReference type="ChEBI" id="CHEBI:57623"/>
    </ligand>
</feature>
<feature type="binding site" evidence="1">
    <location>
        <position position="131"/>
    </location>
    <ligand>
        <name>isopentenyl diphosphate</name>
        <dbReference type="ChEBI" id="CHEBI:128769"/>
    </ligand>
</feature>
<feature type="binding site" evidence="1">
    <location>
        <position position="170"/>
    </location>
    <ligand>
        <name>(2E)-4-hydroxy-3-methylbut-2-enyl diphosphate</name>
        <dbReference type="ChEBI" id="CHEBI:128753"/>
    </ligand>
</feature>
<feature type="binding site" evidence="1">
    <location>
        <position position="198"/>
    </location>
    <ligand>
        <name>[4Fe-4S] cluster</name>
        <dbReference type="ChEBI" id="CHEBI:49883"/>
    </ligand>
</feature>
<feature type="binding site" evidence="1">
    <location>
        <position position="226"/>
    </location>
    <ligand>
        <name>(2E)-4-hydroxy-3-methylbut-2-enyl diphosphate</name>
        <dbReference type="ChEBI" id="CHEBI:128753"/>
    </ligand>
</feature>
<feature type="binding site" evidence="1">
    <location>
        <position position="226"/>
    </location>
    <ligand>
        <name>dimethylallyl diphosphate</name>
        <dbReference type="ChEBI" id="CHEBI:57623"/>
    </ligand>
</feature>
<feature type="binding site" evidence="1">
    <location>
        <position position="226"/>
    </location>
    <ligand>
        <name>isopentenyl diphosphate</name>
        <dbReference type="ChEBI" id="CHEBI:128769"/>
    </ligand>
</feature>
<feature type="binding site" evidence="1">
    <location>
        <position position="228"/>
    </location>
    <ligand>
        <name>(2E)-4-hydroxy-3-methylbut-2-enyl diphosphate</name>
        <dbReference type="ChEBI" id="CHEBI:128753"/>
    </ligand>
</feature>
<feature type="binding site" evidence="1">
    <location>
        <position position="228"/>
    </location>
    <ligand>
        <name>dimethylallyl diphosphate</name>
        <dbReference type="ChEBI" id="CHEBI:57623"/>
    </ligand>
</feature>
<feature type="binding site" evidence="1">
    <location>
        <position position="228"/>
    </location>
    <ligand>
        <name>isopentenyl diphosphate</name>
        <dbReference type="ChEBI" id="CHEBI:128769"/>
    </ligand>
</feature>
<feature type="binding site" evidence="1">
    <location>
        <position position="271"/>
    </location>
    <ligand>
        <name>(2E)-4-hydroxy-3-methylbut-2-enyl diphosphate</name>
        <dbReference type="ChEBI" id="CHEBI:128753"/>
    </ligand>
</feature>
<feature type="binding site" evidence="1">
    <location>
        <position position="271"/>
    </location>
    <ligand>
        <name>dimethylallyl diphosphate</name>
        <dbReference type="ChEBI" id="CHEBI:57623"/>
    </ligand>
</feature>
<feature type="binding site" evidence="1">
    <location>
        <position position="271"/>
    </location>
    <ligand>
        <name>isopentenyl diphosphate</name>
        <dbReference type="ChEBI" id="CHEBI:128769"/>
    </ligand>
</feature>
<gene>
    <name evidence="1" type="primary">ispH</name>
    <name type="ordered locus">Bcer98_3015</name>
</gene>
<protein>
    <recommendedName>
        <fullName evidence="1">4-hydroxy-3-methylbut-2-enyl diphosphate reductase</fullName>
        <shortName evidence="1">HMBPP reductase</shortName>
        <ecNumber evidence="1">1.17.7.4</ecNumber>
    </recommendedName>
</protein>
<evidence type="ECO:0000255" key="1">
    <source>
        <dbReference type="HAMAP-Rule" id="MF_00191"/>
    </source>
</evidence>